<reference key="1">
    <citation type="journal article" date="2011" name="MBio">
        <title>Novel metabolic attributes of the genus Cyanothece, comprising a group of unicellular nitrogen-fixing Cyanobacteria.</title>
        <authorList>
            <person name="Bandyopadhyay A."/>
            <person name="Elvitigala T."/>
            <person name="Welsh E."/>
            <person name="Stockel J."/>
            <person name="Liberton M."/>
            <person name="Min H."/>
            <person name="Sherman L.A."/>
            <person name="Pakrasi H.B."/>
        </authorList>
    </citation>
    <scope>NUCLEOTIDE SEQUENCE [LARGE SCALE GENOMIC DNA]</scope>
    <source>
        <strain>PCC 7425 / ATCC 29141</strain>
    </source>
</reference>
<dbReference type="EC" id="3.5.1.5" evidence="1"/>
<dbReference type="EMBL" id="CP001344">
    <property type="protein sequence ID" value="ACL44630.1"/>
    <property type="molecule type" value="Genomic_DNA"/>
</dbReference>
<dbReference type="SMR" id="B8HW51"/>
<dbReference type="STRING" id="395961.Cyan7425_2270"/>
<dbReference type="KEGG" id="cyn:Cyan7425_2270"/>
<dbReference type="eggNOG" id="COG0832">
    <property type="taxonomic scope" value="Bacteria"/>
</dbReference>
<dbReference type="HOGENOM" id="CLU_129707_1_1_3"/>
<dbReference type="OrthoDB" id="9797217at2"/>
<dbReference type="UniPathway" id="UPA00258">
    <property type="reaction ID" value="UER00370"/>
</dbReference>
<dbReference type="GO" id="GO:0035550">
    <property type="term" value="C:urease complex"/>
    <property type="evidence" value="ECO:0007669"/>
    <property type="project" value="InterPro"/>
</dbReference>
<dbReference type="GO" id="GO:0009039">
    <property type="term" value="F:urease activity"/>
    <property type="evidence" value="ECO:0007669"/>
    <property type="project" value="UniProtKB-UniRule"/>
</dbReference>
<dbReference type="GO" id="GO:0043419">
    <property type="term" value="P:urea catabolic process"/>
    <property type="evidence" value="ECO:0007669"/>
    <property type="project" value="UniProtKB-UniRule"/>
</dbReference>
<dbReference type="CDD" id="cd00407">
    <property type="entry name" value="Urease_beta"/>
    <property type="match status" value="1"/>
</dbReference>
<dbReference type="FunFam" id="2.10.150.10:FF:000001">
    <property type="entry name" value="Urease subunit beta"/>
    <property type="match status" value="1"/>
</dbReference>
<dbReference type="Gene3D" id="2.10.150.10">
    <property type="entry name" value="Urease, beta subunit"/>
    <property type="match status" value="1"/>
</dbReference>
<dbReference type="HAMAP" id="MF_01954">
    <property type="entry name" value="Urease_beta"/>
    <property type="match status" value="1"/>
</dbReference>
<dbReference type="InterPro" id="IPR002019">
    <property type="entry name" value="Urease_beta-like"/>
</dbReference>
<dbReference type="InterPro" id="IPR036461">
    <property type="entry name" value="Urease_betasu_sf"/>
</dbReference>
<dbReference type="InterPro" id="IPR050069">
    <property type="entry name" value="Urease_subunit"/>
</dbReference>
<dbReference type="NCBIfam" id="NF009682">
    <property type="entry name" value="PRK13203.1"/>
    <property type="match status" value="1"/>
</dbReference>
<dbReference type="NCBIfam" id="TIGR00192">
    <property type="entry name" value="urease_beta"/>
    <property type="match status" value="1"/>
</dbReference>
<dbReference type="PANTHER" id="PTHR33569">
    <property type="entry name" value="UREASE"/>
    <property type="match status" value="1"/>
</dbReference>
<dbReference type="PANTHER" id="PTHR33569:SF1">
    <property type="entry name" value="UREASE"/>
    <property type="match status" value="1"/>
</dbReference>
<dbReference type="Pfam" id="PF00699">
    <property type="entry name" value="Urease_beta"/>
    <property type="match status" value="1"/>
</dbReference>
<dbReference type="SUPFAM" id="SSF51278">
    <property type="entry name" value="Urease, beta-subunit"/>
    <property type="match status" value="1"/>
</dbReference>
<proteinExistence type="inferred from homology"/>
<sequence>MIPGELLPLEGEIELNAGRETVTLTVANTGDRPIQVGSHFHFYEVNAALNFEREPARGMRLDIPAGTAVRFEPGDERTVTLVPLAGSREVYGFNARIEGPLDGKGKKAKGKNK</sequence>
<protein>
    <recommendedName>
        <fullName evidence="1">Urease subunit beta</fullName>
        <ecNumber evidence="1">3.5.1.5</ecNumber>
    </recommendedName>
    <alternativeName>
        <fullName evidence="1">Urea amidohydrolase subunit beta</fullName>
    </alternativeName>
</protein>
<gene>
    <name evidence="1" type="primary">ureB</name>
    <name type="ordered locus">Cyan7425_2270</name>
</gene>
<comment type="catalytic activity">
    <reaction evidence="1">
        <text>urea + 2 H2O + H(+) = hydrogencarbonate + 2 NH4(+)</text>
        <dbReference type="Rhea" id="RHEA:20557"/>
        <dbReference type="ChEBI" id="CHEBI:15377"/>
        <dbReference type="ChEBI" id="CHEBI:15378"/>
        <dbReference type="ChEBI" id="CHEBI:16199"/>
        <dbReference type="ChEBI" id="CHEBI:17544"/>
        <dbReference type="ChEBI" id="CHEBI:28938"/>
        <dbReference type="EC" id="3.5.1.5"/>
    </reaction>
</comment>
<comment type="pathway">
    <text evidence="1">Nitrogen metabolism; urea degradation; CO(2) and NH(3) from urea (urease route): step 1/1.</text>
</comment>
<comment type="subunit">
    <text evidence="1">Heterotrimer of UreA (gamma), UreB (beta) and UreC (alpha) subunits. Three heterotrimers associate to form the active enzyme.</text>
</comment>
<comment type="subcellular location">
    <subcellularLocation>
        <location evidence="1">Cytoplasm</location>
    </subcellularLocation>
</comment>
<comment type="similarity">
    <text evidence="1">Belongs to the urease beta subunit family.</text>
</comment>
<keyword id="KW-0963">Cytoplasm</keyword>
<keyword id="KW-0378">Hydrolase</keyword>
<accession>B8HW51</accession>
<evidence type="ECO:0000255" key="1">
    <source>
        <dbReference type="HAMAP-Rule" id="MF_01954"/>
    </source>
</evidence>
<organism>
    <name type="scientific">Cyanothece sp. (strain PCC 7425 / ATCC 29141)</name>
    <dbReference type="NCBI Taxonomy" id="395961"/>
    <lineage>
        <taxon>Bacteria</taxon>
        <taxon>Bacillati</taxon>
        <taxon>Cyanobacteriota</taxon>
        <taxon>Cyanophyceae</taxon>
        <taxon>Gomontiellales</taxon>
        <taxon>Cyanothecaceae</taxon>
        <taxon>Cyanothece</taxon>
    </lineage>
</organism>
<feature type="chain" id="PRO_1000188920" description="Urease subunit beta">
    <location>
        <begin position="1"/>
        <end position="113"/>
    </location>
</feature>
<name>URE2_CYAP4</name>